<evidence type="ECO:0000255" key="1">
    <source>
        <dbReference type="PROSITE-ProRule" id="PRU00057"/>
    </source>
</evidence>
<evidence type="ECO:0000269" key="2">
    <source>
    </source>
</evidence>
<evidence type="ECO:0000305" key="3"/>
<evidence type="ECO:0000305" key="4">
    <source>
    </source>
</evidence>
<evidence type="ECO:0000305" key="5">
    <source>
    </source>
</evidence>
<name>RIC2_ARATH</name>
<proteinExistence type="evidence at protein level"/>
<keyword id="KW-1003">Cell membrane</keyword>
<keyword id="KW-0341">Growth regulation</keyword>
<keyword id="KW-0472">Membrane</keyword>
<keyword id="KW-1185">Reference proteome</keyword>
<sequence length="111" mass="12586">MDRNGANMLDGRVESDAKGSFRKDYTKMENNNNGANISDGIYRIIRSFKSFSHFFIRYEEETKEREAEMEIGFPTDVKHLSHIGVDGTMTTFDNTSSSFPFSGFHLTGTVV</sequence>
<feature type="chain" id="PRO_0000422725" description="CRIB domain-containing protein RIC2">
    <location>
        <begin position="1"/>
        <end position="111"/>
    </location>
</feature>
<feature type="domain" description="CRIB" evidence="1">
    <location>
        <begin position="71"/>
        <end position="84"/>
    </location>
</feature>
<organism>
    <name type="scientific">Arabidopsis thaliana</name>
    <name type="common">Mouse-ear cress</name>
    <dbReference type="NCBI Taxonomy" id="3702"/>
    <lineage>
        <taxon>Eukaryota</taxon>
        <taxon>Viridiplantae</taxon>
        <taxon>Streptophyta</taxon>
        <taxon>Embryophyta</taxon>
        <taxon>Tracheophyta</taxon>
        <taxon>Spermatophyta</taxon>
        <taxon>Magnoliopsida</taxon>
        <taxon>eudicotyledons</taxon>
        <taxon>Gunneridae</taxon>
        <taxon>Pentapetalae</taxon>
        <taxon>rosids</taxon>
        <taxon>malvids</taxon>
        <taxon>Brassicales</taxon>
        <taxon>Brassicaceae</taxon>
        <taxon>Camelineae</taxon>
        <taxon>Arabidopsis</taxon>
    </lineage>
</organism>
<accession>Q8GYU0</accession>
<accession>Q8VWR4</accession>
<accession>Q9FZJ8</accession>
<reference key="1">
    <citation type="submission" date="2001-01" db="EMBL/GenBank/DDBJ databases">
        <title>Identification of Rop-interacting proteins from A. thaliana.</title>
        <authorList>
            <person name="Bavlnka B."/>
            <person name="Zarsky V."/>
            <person name="Cvrckova F."/>
        </authorList>
    </citation>
    <scope>NUCLEOTIDE SEQUENCE [MRNA]</scope>
    <source>
        <strain>cv. Columbia</strain>
    </source>
</reference>
<reference key="2">
    <citation type="journal article" date="2000" name="Nature">
        <title>Sequence and analysis of chromosome 1 of the plant Arabidopsis thaliana.</title>
        <authorList>
            <person name="Theologis A."/>
            <person name="Ecker J.R."/>
            <person name="Palm C.J."/>
            <person name="Federspiel N.A."/>
            <person name="Kaul S."/>
            <person name="White O."/>
            <person name="Alonso J."/>
            <person name="Altafi H."/>
            <person name="Araujo R."/>
            <person name="Bowman C.L."/>
            <person name="Brooks S.Y."/>
            <person name="Buehler E."/>
            <person name="Chan A."/>
            <person name="Chao Q."/>
            <person name="Chen H."/>
            <person name="Cheuk R.F."/>
            <person name="Chin C.W."/>
            <person name="Chung M.K."/>
            <person name="Conn L."/>
            <person name="Conway A.B."/>
            <person name="Conway A.R."/>
            <person name="Creasy T.H."/>
            <person name="Dewar K."/>
            <person name="Dunn P."/>
            <person name="Etgu P."/>
            <person name="Feldblyum T.V."/>
            <person name="Feng J.-D."/>
            <person name="Fong B."/>
            <person name="Fujii C.Y."/>
            <person name="Gill J.E."/>
            <person name="Goldsmith A.D."/>
            <person name="Haas B."/>
            <person name="Hansen N.F."/>
            <person name="Hughes B."/>
            <person name="Huizar L."/>
            <person name="Hunter J.L."/>
            <person name="Jenkins J."/>
            <person name="Johnson-Hopson C."/>
            <person name="Khan S."/>
            <person name="Khaykin E."/>
            <person name="Kim C.J."/>
            <person name="Koo H.L."/>
            <person name="Kremenetskaia I."/>
            <person name="Kurtz D.B."/>
            <person name="Kwan A."/>
            <person name="Lam B."/>
            <person name="Langin-Hooper S."/>
            <person name="Lee A."/>
            <person name="Lee J.M."/>
            <person name="Lenz C.A."/>
            <person name="Li J.H."/>
            <person name="Li Y.-P."/>
            <person name="Lin X."/>
            <person name="Liu S.X."/>
            <person name="Liu Z.A."/>
            <person name="Luros J.S."/>
            <person name="Maiti R."/>
            <person name="Marziali A."/>
            <person name="Militscher J."/>
            <person name="Miranda M."/>
            <person name="Nguyen M."/>
            <person name="Nierman W.C."/>
            <person name="Osborne B.I."/>
            <person name="Pai G."/>
            <person name="Peterson J."/>
            <person name="Pham P.K."/>
            <person name="Rizzo M."/>
            <person name="Rooney T."/>
            <person name="Rowley D."/>
            <person name="Sakano H."/>
            <person name="Salzberg S.L."/>
            <person name="Schwartz J.R."/>
            <person name="Shinn P."/>
            <person name="Southwick A.M."/>
            <person name="Sun H."/>
            <person name="Tallon L.J."/>
            <person name="Tambunga G."/>
            <person name="Toriumi M.J."/>
            <person name="Town C.D."/>
            <person name="Utterback T."/>
            <person name="Van Aken S."/>
            <person name="Vaysberg M."/>
            <person name="Vysotskaia V.S."/>
            <person name="Walker M."/>
            <person name="Wu D."/>
            <person name="Yu G."/>
            <person name="Fraser C.M."/>
            <person name="Venter J.C."/>
            <person name="Davis R.W."/>
        </authorList>
    </citation>
    <scope>NUCLEOTIDE SEQUENCE [LARGE SCALE GENOMIC DNA]</scope>
    <source>
        <strain>cv. Columbia</strain>
    </source>
</reference>
<reference key="3">
    <citation type="journal article" date="2017" name="Plant J.">
        <title>Araport11: a complete reannotation of the Arabidopsis thaliana reference genome.</title>
        <authorList>
            <person name="Cheng C.Y."/>
            <person name="Krishnakumar V."/>
            <person name="Chan A.P."/>
            <person name="Thibaud-Nissen F."/>
            <person name="Schobel S."/>
            <person name="Town C.D."/>
        </authorList>
    </citation>
    <scope>GENOME REANNOTATION</scope>
    <source>
        <strain>cv. Columbia</strain>
    </source>
</reference>
<reference key="4">
    <citation type="journal article" date="2002" name="Science">
        <title>Functional annotation of a full-length Arabidopsis cDNA collection.</title>
        <authorList>
            <person name="Seki M."/>
            <person name="Narusaka M."/>
            <person name="Kamiya A."/>
            <person name="Ishida J."/>
            <person name="Satou M."/>
            <person name="Sakurai T."/>
            <person name="Nakajima M."/>
            <person name="Enju A."/>
            <person name="Akiyama K."/>
            <person name="Oono Y."/>
            <person name="Muramatsu M."/>
            <person name="Hayashizaki Y."/>
            <person name="Kawai J."/>
            <person name="Carninci P."/>
            <person name="Itoh M."/>
            <person name="Ishii Y."/>
            <person name="Arakawa T."/>
            <person name="Shibata K."/>
            <person name="Shinagawa A."/>
            <person name="Shinozaki K."/>
        </authorList>
    </citation>
    <scope>NUCLEOTIDE SEQUENCE [LARGE SCALE MRNA]</scope>
    <source>
        <strain>cv. Columbia</strain>
    </source>
</reference>
<reference key="5">
    <citation type="submission" date="2006-03" db="EMBL/GenBank/DDBJ databases">
        <title>Arabidopsis ORF clones.</title>
        <authorList>
            <person name="Kim C.J."/>
            <person name="Chen H."/>
            <person name="Shinn P."/>
            <person name="Ecker J.R."/>
        </authorList>
    </citation>
    <scope>NUCLEOTIDE SEQUENCE [LARGE SCALE MRNA]</scope>
    <source>
        <strain>cv. Columbia</strain>
    </source>
</reference>
<reference key="6">
    <citation type="journal article" date="2001" name="Plant Cell">
        <title>A genome-wide analysis of Arabidopsis Rop-interactive CRIB motif-containing proteins that act as Rop GTPase targets.</title>
        <authorList>
            <person name="Wu G."/>
            <person name="Gu Y."/>
            <person name="Li S."/>
            <person name="Yang Z."/>
        </authorList>
    </citation>
    <scope>FUNCTION</scope>
    <scope>INTERACTION WITH ARAC11/ROP1</scope>
    <scope>SUBCELLULAR LOCATION</scope>
    <scope>TISSUE SPECIFICITY</scope>
    <scope>GENE FAMILY</scope>
    <scope>NOMENCLATURE</scope>
</reference>
<reference key="7">
    <citation type="journal article" date="2010" name="PLoS ONE">
        <title>An integrative approach to the identification of Arabidopsis and rice genes involved in xylan and secondary wall development.</title>
        <authorList>
            <person name="Oikawa A."/>
            <person name="Joshi H.J."/>
            <person name="Rennie E.A."/>
            <person name="Ebert B."/>
            <person name="Manisseri C."/>
            <person name="Heazlewood J.L."/>
            <person name="Scheller H.V."/>
        </authorList>
    </citation>
    <scope>SUBCELLULAR LOCATION</scope>
</reference>
<protein>
    <recommendedName>
        <fullName>CRIB domain-containing protein RIC2</fullName>
    </recommendedName>
    <alternativeName>
        <fullName>ROP-interactive CRIB motif-containing protein 2</fullName>
    </alternativeName>
    <alternativeName>
        <fullName>Target of ROP protein RIC2</fullName>
    </alternativeName>
</protein>
<gene>
    <name type="primary">RIC2</name>
    <name type="synonym">ric1</name>
    <name type="ordered locus">At1g27380</name>
    <name type="ORF">F17L21.16</name>
</gene>
<dbReference type="EMBL" id="AJ309372">
    <property type="protein sequence ID" value="CAC83627.1"/>
    <property type="status" value="ALT_INIT"/>
    <property type="molecule type" value="mRNA"/>
</dbReference>
<dbReference type="EMBL" id="AC004557">
    <property type="protein sequence ID" value="AAF99747.1"/>
    <property type="status" value="ALT_SEQ"/>
    <property type="molecule type" value="Genomic_DNA"/>
</dbReference>
<dbReference type="EMBL" id="CP002684">
    <property type="protein sequence ID" value="AEE30818.1"/>
    <property type="molecule type" value="Genomic_DNA"/>
</dbReference>
<dbReference type="EMBL" id="CP002684">
    <property type="protein sequence ID" value="AEE30819.1"/>
    <property type="molecule type" value="Genomic_DNA"/>
</dbReference>
<dbReference type="EMBL" id="AK117390">
    <property type="protein sequence ID" value="BAC42059.1"/>
    <property type="molecule type" value="mRNA"/>
</dbReference>
<dbReference type="EMBL" id="BT024810">
    <property type="protein sequence ID" value="ABD60693.1"/>
    <property type="molecule type" value="mRNA"/>
</dbReference>
<dbReference type="PIR" id="C86399">
    <property type="entry name" value="C86399"/>
</dbReference>
<dbReference type="RefSeq" id="NP_564281.2">
    <property type="nucleotide sequence ID" value="NM_102500.3"/>
</dbReference>
<dbReference type="RefSeq" id="NP_849713.1">
    <property type="nucleotide sequence ID" value="NM_179382.1"/>
</dbReference>
<dbReference type="BioGRID" id="24862">
    <property type="interactions" value="1"/>
</dbReference>
<dbReference type="FunCoup" id="Q8GYU0">
    <property type="interactions" value="5"/>
</dbReference>
<dbReference type="STRING" id="3702.Q8GYU0"/>
<dbReference type="PaxDb" id="3702-AT1G27380.1"/>
<dbReference type="ProteomicsDB" id="236865"/>
<dbReference type="EnsemblPlants" id="AT1G27380.1">
    <property type="protein sequence ID" value="AT1G27380.1"/>
    <property type="gene ID" value="AT1G27380"/>
</dbReference>
<dbReference type="EnsemblPlants" id="AT1G27380.2">
    <property type="protein sequence ID" value="AT1G27380.2"/>
    <property type="gene ID" value="AT1G27380"/>
</dbReference>
<dbReference type="GeneID" id="839627"/>
<dbReference type="Gramene" id="AT1G27380.1">
    <property type="protein sequence ID" value="AT1G27380.1"/>
    <property type="gene ID" value="AT1G27380"/>
</dbReference>
<dbReference type="Gramene" id="AT1G27380.2">
    <property type="protein sequence ID" value="AT1G27380.2"/>
    <property type="gene ID" value="AT1G27380"/>
</dbReference>
<dbReference type="KEGG" id="ath:AT1G27380"/>
<dbReference type="Araport" id="AT1G27380"/>
<dbReference type="TAIR" id="AT1G27380">
    <property type="gene designation" value="RIC2"/>
</dbReference>
<dbReference type="HOGENOM" id="CLU_114322_3_0_1"/>
<dbReference type="InParanoid" id="Q8GYU0"/>
<dbReference type="OMA" id="SHYFIRY"/>
<dbReference type="PRO" id="PR:Q8GYU0"/>
<dbReference type="Proteomes" id="UP000006548">
    <property type="component" value="Chromosome 1"/>
</dbReference>
<dbReference type="ExpressionAtlas" id="Q8GYU0">
    <property type="expression patterns" value="baseline and differential"/>
</dbReference>
<dbReference type="GO" id="GO:0005886">
    <property type="term" value="C:plasma membrane"/>
    <property type="evidence" value="ECO:0000314"/>
    <property type="project" value="TAIR"/>
</dbReference>
<dbReference type="GO" id="GO:0009860">
    <property type="term" value="P:pollen tube growth"/>
    <property type="evidence" value="ECO:0000315"/>
    <property type="project" value="TAIR"/>
</dbReference>
<dbReference type="InterPro" id="IPR000095">
    <property type="entry name" value="CRIB_dom"/>
</dbReference>
<dbReference type="InterPro" id="IPR044509">
    <property type="entry name" value="RIC2/4"/>
</dbReference>
<dbReference type="PANTHER" id="PTHR46931">
    <property type="entry name" value="CRIB DOMAIN-CONTAINING PROTEIN RIC2"/>
    <property type="match status" value="1"/>
</dbReference>
<dbReference type="PANTHER" id="PTHR46931:SF14">
    <property type="entry name" value="CRIB DOMAIN-CONTAINING PROTEIN RIC2"/>
    <property type="match status" value="1"/>
</dbReference>
<dbReference type="SMART" id="SM00285">
    <property type="entry name" value="PBD"/>
    <property type="match status" value="1"/>
</dbReference>
<dbReference type="PROSITE" id="PS50108">
    <property type="entry name" value="CRIB"/>
    <property type="match status" value="1"/>
</dbReference>
<comment type="function">
    <text evidence="2">Functions as a downstream effector of Rho-related GTP binding proteins of the 'Rho of Plants' (ROPs) family. Participates in the propagation of ROP GTPase signals in specific cellular responses. Is involved in pollen tube growth regulation through its interaction with ARAC11/ROP1.</text>
</comment>
<comment type="subunit">
    <text evidence="2">Interacts with ARAC11/ROP1.</text>
</comment>
<comment type="subcellular location">
    <subcellularLocation>
        <location evidence="4 5">Cell membrane</location>
        <topology evidence="4 5">Peripheral membrane protein</topology>
    </subcellularLocation>
</comment>
<comment type="tissue specificity">
    <text evidence="2">Expressed in roots, leaves, stems, flowers, siliques and pollen.</text>
</comment>
<comment type="miscellaneous">
    <text evidence="4">Over-expression of RIC2 in tobacco germinating pollen reduces pollen tube elongation.</text>
</comment>
<comment type="sequence caution" evidence="3">
    <conflict type="erroneous gene model prediction">
        <sequence resource="EMBL-CDS" id="AAF99747"/>
    </conflict>
</comment>
<comment type="sequence caution" evidence="3">
    <conflict type="erroneous initiation">
        <sequence resource="EMBL-CDS" id="CAC83627"/>
    </conflict>
    <text>Extended N-terminus.</text>
</comment>